<keyword id="KW-0046">Antibiotic resistance</keyword>
<keyword id="KW-0997">Cell inner membrane</keyword>
<keyword id="KW-1003">Cell membrane</keyword>
<keyword id="KW-0328">Glycosyltransferase</keyword>
<keyword id="KW-0441">Lipid A biosynthesis</keyword>
<keyword id="KW-0444">Lipid biosynthesis</keyword>
<keyword id="KW-0443">Lipid metabolism</keyword>
<keyword id="KW-0448">Lipopolysaccharide biosynthesis</keyword>
<keyword id="KW-0472">Membrane</keyword>
<keyword id="KW-0808">Transferase</keyword>
<keyword id="KW-0812">Transmembrane</keyword>
<keyword id="KW-1133">Transmembrane helix</keyword>
<reference key="1">
    <citation type="submission" date="2007-09" db="EMBL/GenBank/DDBJ databases">
        <title>Complete sequence of chromosome of Serratia proteamaculans 568.</title>
        <authorList>
            <consortium name="US DOE Joint Genome Institute"/>
            <person name="Copeland A."/>
            <person name="Lucas S."/>
            <person name="Lapidus A."/>
            <person name="Barry K."/>
            <person name="Glavina del Rio T."/>
            <person name="Dalin E."/>
            <person name="Tice H."/>
            <person name="Pitluck S."/>
            <person name="Chain P."/>
            <person name="Malfatti S."/>
            <person name="Shin M."/>
            <person name="Vergez L."/>
            <person name="Schmutz J."/>
            <person name="Larimer F."/>
            <person name="Land M."/>
            <person name="Hauser L."/>
            <person name="Kyrpides N."/>
            <person name="Kim E."/>
            <person name="Taghavi S."/>
            <person name="Newman L."/>
            <person name="Vangronsveld J."/>
            <person name="van der Lelie D."/>
            <person name="Richardson P."/>
        </authorList>
    </citation>
    <scope>NUCLEOTIDE SEQUENCE [LARGE SCALE GENOMIC DNA]</scope>
    <source>
        <strain>568</strain>
    </source>
</reference>
<organism>
    <name type="scientific">Serratia proteamaculans (strain 568)</name>
    <dbReference type="NCBI Taxonomy" id="399741"/>
    <lineage>
        <taxon>Bacteria</taxon>
        <taxon>Pseudomonadati</taxon>
        <taxon>Pseudomonadota</taxon>
        <taxon>Gammaproteobacteria</taxon>
        <taxon>Enterobacterales</taxon>
        <taxon>Yersiniaceae</taxon>
        <taxon>Serratia</taxon>
    </lineage>
</organism>
<dbReference type="EC" id="2.4.2.53" evidence="1"/>
<dbReference type="EMBL" id="CP000826">
    <property type="protein sequence ID" value="ABV41256.1"/>
    <property type="molecule type" value="Genomic_DNA"/>
</dbReference>
<dbReference type="SMR" id="A8GDR6"/>
<dbReference type="STRING" id="399741.Spro_2155"/>
<dbReference type="CAZy" id="GT2">
    <property type="family name" value="Glycosyltransferase Family 2"/>
</dbReference>
<dbReference type="KEGG" id="spe:Spro_2155"/>
<dbReference type="eggNOG" id="COG1215">
    <property type="taxonomic scope" value="Bacteria"/>
</dbReference>
<dbReference type="HOGENOM" id="CLU_033536_0_0_6"/>
<dbReference type="OrthoDB" id="9811884at2"/>
<dbReference type="UniPathway" id="UPA00030"/>
<dbReference type="UniPathway" id="UPA00036">
    <property type="reaction ID" value="UER00495"/>
</dbReference>
<dbReference type="GO" id="GO:0005886">
    <property type="term" value="C:plasma membrane"/>
    <property type="evidence" value="ECO:0007669"/>
    <property type="project" value="UniProtKB-SubCell"/>
</dbReference>
<dbReference type="GO" id="GO:0016780">
    <property type="term" value="F:phosphotransferase activity, for other substituted phosphate groups"/>
    <property type="evidence" value="ECO:0007669"/>
    <property type="project" value="UniProtKB-UniRule"/>
</dbReference>
<dbReference type="GO" id="GO:0099621">
    <property type="term" value="F:undecaprenyl-phosphate 4-deoxy-4-formamido-L-arabinose transferase activity"/>
    <property type="evidence" value="ECO:0007669"/>
    <property type="project" value="UniProtKB-EC"/>
</dbReference>
<dbReference type="GO" id="GO:0036108">
    <property type="term" value="P:4-amino-4-deoxy-alpha-L-arabinopyranosyl undecaprenyl phosphate biosynthetic process"/>
    <property type="evidence" value="ECO:0007669"/>
    <property type="project" value="UniProtKB-UniRule"/>
</dbReference>
<dbReference type="GO" id="GO:0009245">
    <property type="term" value="P:lipid A biosynthetic process"/>
    <property type="evidence" value="ECO:0007669"/>
    <property type="project" value="UniProtKB-UniRule"/>
</dbReference>
<dbReference type="GO" id="GO:0009103">
    <property type="term" value="P:lipopolysaccharide biosynthetic process"/>
    <property type="evidence" value="ECO:0007669"/>
    <property type="project" value="UniProtKB-UniRule"/>
</dbReference>
<dbReference type="GO" id="GO:0046677">
    <property type="term" value="P:response to antibiotic"/>
    <property type="evidence" value="ECO:0007669"/>
    <property type="project" value="UniProtKB-KW"/>
</dbReference>
<dbReference type="CDD" id="cd04187">
    <property type="entry name" value="DPM1_like_bac"/>
    <property type="match status" value="1"/>
</dbReference>
<dbReference type="FunFam" id="3.90.550.10:FF:000019">
    <property type="entry name" value="Undecaprenyl-phosphate 4-deoxy-4-formamido-L-arabinose transferase"/>
    <property type="match status" value="1"/>
</dbReference>
<dbReference type="Gene3D" id="3.90.550.10">
    <property type="entry name" value="Spore Coat Polysaccharide Biosynthesis Protein SpsA, Chain A"/>
    <property type="match status" value="1"/>
</dbReference>
<dbReference type="HAMAP" id="MF_01164">
    <property type="entry name" value="ArnC_transfer"/>
    <property type="match status" value="1"/>
</dbReference>
<dbReference type="InterPro" id="IPR022857">
    <property type="entry name" value="ArnC_tfrase"/>
</dbReference>
<dbReference type="InterPro" id="IPR001173">
    <property type="entry name" value="Glyco_trans_2-like"/>
</dbReference>
<dbReference type="InterPro" id="IPR050256">
    <property type="entry name" value="Glycosyltransferase_2"/>
</dbReference>
<dbReference type="InterPro" id="IPR029044">
    <property type="entry name" value="Nucleotide-diphossugar_trans"/>
</dbReference>
<dbReference type="NCBIfam" id="NF007986">
    <property type="entry name" value="PRK10714.1"/>
    <property type="match status" value="1"/>
</dbReference>
<dbReference type="PANTHER" id="PTHR48090:SF3">
    <property type="entry name" value="UNDECAPRENYL-PHOSPHATE 4-DEOXY-4-FORMAMIDO-L-ARABINOSE TRANSFERASE"/>
    <property type="match status" value="1"/>
</dbReference>
<dbReference type="PANTHER" id="PTHR48090">
    <property type="entry name" value="UNDECAPRENYL-PHOSPHATE 4-DEOXY-4-FORMAMIDO-L-ARABINOSE TRANSFERASE-RELATED"/>
    <property type="match status" value="1"/>
</dbReference>
<dbReference type="Pfam" id="PF00535">
    <property type="entry name" value="Glycos_transf_2"/>
    <property type="match status" value="1"/>
</dbReference>
<dbReference type="SUPFAM" id="SSF53448">
    <property type="entry name" value="Nucleotide-diphospho-sugar transferases"/>
    <property type="match status" value="1"/>
</dbReference>
<accession>A8GDR6</accession>
<name>ARNC_SERP5</name>
<gene>
    <name evidence="1" type="primary">arnC</name>
    <name type="ordered locus">Spro_2155</name>
</gene>
<feature type="chain" id="PRO_1000065656" description="Undecaprenyl-phosphate 4-deoxy-4-formamido-L-arabinose transferase">
    <location>
        <begin position="1"/>
        <end position="326"/>
    </location>
</feature>
<feature type="transmembrane region" description="Helical" evidence="1">
    <location>
        <begin position="235"/>
        <end position="255"/>
    </location>
</feature>
<feature type="transmembrane region" description="Helical" evidence="1">
    <location>
        <begin position="270"/>
        <end position="290"/>
    </location>
</feature>
<evidence type="ECO:0000255" key="1">
    <source>
        <dbReference type="HAMAP-Rule" id="MF_01164"/>
    </source>
</evidence>
<proteinExistence type="inferred from homology"/>
<sequence length="326" mass="36227">MSRVEPIKKVSVVIPVYNEQESLPALLERTTAACKQLTQPYEIILVDDGSSDNSADMLTAAAEQPGSCVIAVLLNRNYGQHSAIMAGFNQVSGDLVITLDADLQNPPEEIPRLVKVAEEGYDVVGTVRANRQDSWFRKSASRIINMMIQRATGKSMGDYGCMLRAYRRHIIEAMLNCHERSTFIPILANTFARRTTEIEVLHAEREFGDSKYSLMKLINLMYDLITCLTTTPLRLLSVVGSVVALSGFLLAVLLIALRLIMGPEWSGGGVFTLFAVLFTFIGAQFVGMGLLGEYIGRIYTDVRARPRYFVQKVVGEQPNHNTQEEE</sequence>
<protein>
    <recommendedName>
        <fullName evidence="1">Undecaprenyl-phosphate 4-deoxy-4-formamido-L-arabinose transferase</fullName>
        <ecNumber evidence="1">2.4.2.53</ecNumber>
    </recommendedName>
    <alternativeName>
        <fullName evidence="1">Undecaprenyl-phosphate Ara4FN transferase</fullName>
        <shortName evidence="1">Ara4FN transferase</shortName>
    </alternativeName>
</protein>
<comment type="function">
    <text evidence="1">Catalyzes the transfer of 4-deoxy-4-formamido-L-arabinose from UDP to undecaprenyl phosphate. The modified arabinose is attached to lipid A and is required for resistance to polymyxin and cationic antimicrobial peptides.</text>
</comment>
<comment type="catalytic activity">
    <reaction evidence="1">
        <text>UDP-4-deoxy-4-formamido-beta-L-arabinose + di-trans,octa-cis-undecaprenyl phosphate = 4-deoxy-4-formamido-alpha-L-arabinopyranosyl di-trans,octa-cis-undecaprenyl phosphate + UDP</text>
        <dbReference type="Rhea" id="RHEA:27722"/>
        <dbReference type="ChEBI" id="CHEBI:58223"/>
        <dbReference type="ChEBI" id="CHEBI:58709"/>
        <dbReference type="ChEBI" id="CHEBI:58909"/>
        <dbReference type="ChEBI" id="CHEBI:60392"/>
        <dbReference type="EC" id="2.4.2.53"/>
    </reaction>
</comment>
<comment type="pathway">
    <text evidence="1">Glycolipid biosynthesis; 4-amino-4-deoxy-alpha-L-arabinose undecaprenyl phosphate biosynthesis; 4-amino-4-deoxy-alpha-L-arabinose undecaprenyl phosphate from UDP-4-deoxy-4-formamido-beta-L-arabinose and undecaprenyl phosphate: step 1/2.</text>
</comment>
<comment type="pathway">
    <text evidence="1">Bacterial outer membrane biogenesis; lipopolysaccharide biosynthesis.</text>
</comment>
<comment type="subcellular location">
    <subcellularLocation>
        <location evidence="1">Cell inner membrane</location>
        <topology evidence="1">Multi-pass membrane protein</topology>
    </subcellularLocation>
</comment>
<comment type="similarity">
    <text evidence="1">Belongs to the glycosyltransferase 2 family.</text>
</comment>